<sequence length="103" mass="11638">MYAVFQSGGKQHRVSEGQTIRLEKLDIATGEAVEFDQILMIANGEDIKIGVPYVDGGKIKAEVVAHGRGEKIKIVKFRRRKHHRKQQGHRQWFTDVKITGISA</sequence>
<organism>
    <name type="scientific">Serratia proteamaculans (strain 568)</name>
    <dbReference type="NCBI Taxonomy" id="399741"/>
    <lineage>
        <taxon>Bacteria</taxon>
        <taxon>Pseudomonadati</taxon>
        <taxon>Pseudomonadota</taxon>
        <taxon>Gammaproteobacteria</taxon>
        <taxon>Enterobacterales</taxon>
        <taxon>Yersiniaceae</taxon>
        <taxon>Serratia</taxon>
    </lineage>
</organism>
<dbReference type="EMBL" id="CP000826">
    <property type="protein sequence ID" value="ABV39581.1"/>
    <property type="molecule type" value="Genomic_DNA"/>
</dbReference>
<dbReference type="SMR" id="A8G8Z1"/>
<dbReference type="STRING" id="399741.Spro_0473"/>
<dbReference type="KEGG" id="spe:Spro_0473"/>
<dbReference type="eggNOG" id="COG0261">
    <property type="taxonomic scope" value="Bacteria"/>
</dbReference>
<dbReference type="HOGENOM" id="CLU_061463_3_3_6"/>
<dbReference type="OrthoDB" id="9813334at2"/>
<dbReference type="GO" id="GO:0005737">
    <property type="term" value="C:cytoplasm"/>
    <property type="evidence" value="ECO:0007669"/>
    <property type="project" value="UniProtKB-ARBA"/>
</dbReference>
<dbReference type="GO" id="GO:1990904">
    <property type="term" value="C:ribonucleoprotein complex"/>
    <property type="evidence" value="ECO:0007669"/>
    <property type="project" value="UniProtKB-KW"/>
</dbReference>
<dbReference type="GO" id="GO:0005840">
    <property type="term" value="C:ribosome"/>
    <property type="evidence" value="ECO:0007669"/>
    <property type="project" value="UniProtKB-KW"/>
</dbReference>
<dbReference type="GO" id="GO:0019843">
    <property type="term" value="F:rRNA binding"/>
    <property type="evidence" value="ECO:0007669"/>
    <property type="project" value="UniProtKB-UniRule"/>
</dbReference>
<dbReference type="GO" id="GO:0003735">
    <property type="term" value="F:structural constituent of ribosome"/>
    <property type="evidence" value="ECO:0007669"/>
    <property type="project" value="InterPro"/>
</dbReference>
<dbReference type="GO" id="GO:0006412">
    <property type="term" value="P:translation"/>
    <property type="evidence" value="ECO:0007669"/>
    <property type="project" value="UniProtKB-UniRule"/>
</dbReference>
<dbReference type="HAMAP" id="MF_01363">
    <property type="entry name" value="Ribosomal_bL21"/>
    <property type="match status" value="1"/>
</dbReference>
<dbReference type="InterPro" id="IPR028909">
    <property type="entry name" value="bL21-like"/>
</dbReference>
<dbReference type="InterPro" id="IPR036164">
    <property type="entry name" value="bL21-like_sf"/>
</dbReference>
<dbReference type="InterPro" id="IPR001787">
    <property type="entry name" value="Ribosomal_bL21"/>
</dbReference>
<dbReference type="InterPro" id="IPR018258">
    <property type="entry name" value="Ribosomal_bL21_CS"/>
</dbReference>
<dbReference type="NCBIfam" id="TIGR00061">
    <property type="entry name" value="L21"/>
    <property type="match status" value="1"/>
</dbReference>
<dbReference type="PANTHER" id="PTHR21349">
    <property type="entry name" value="50S RIBOSOMAL PROTEIN L21"/>
    <property type="match status" value="1"/>
</dbReference>
<dbReference type="PANTHER" id="PTHR21349:SF0">
    <property type="entry name" value="LARGE RIBOSOMAL SUBUNIT PROTEIN BL21M"/>
    <property type="match status" value="1"/>
</dbReference>
<dbReference type="Pfam" id="PF00829">
    <property type="entry name" value="Ribosomal_L21p"/>
    <property type="match status" value="1"/>
</dbReference>
<dbReference type="SUPFAM" id="SSF141091">
    <property type="entry name" value="L21p-like"/>
    <property type="match status" value="1"/>
</dbReference>
<dbReference type="PROSITE" id="PS01169">
    <property type="entry name" value="RIBOSOMAL_L21"/>
    <property type="match status" value="1"/>
</dbReference>
<name>RL21_SERP5</name>
<feature type="chain" id="PRO_1000067892" description="Large ribosomal subunit protein bL21">
    <location>
        <begin position="1"/>
        <end position="103"/>
    </location>
</feature>
<proteinExistence type="inferred from homology"/>
<comment type="function">
    <text evidence="1">This protein binds to 23S rRNA in the presence of protein L20.</text>
</comment>
<comment type="subunit">
    <text evidence="1">Part of the 50S ribosomal subunit. Contacts protein L20.</text>
</comment>
<comment type="similarity">
    <text evidence="1">Belongs to the bacterial ribosomal protein bL21 family.</text>
</comment>
<protein>
    <recommendedName>
        <fullName evidence="1">Large ribosomal subunit protein bL21</fullName>
    </recommendedName>
    <alternativeName>
        <fullName evidence="2">50S ribosomal protein L21</fullName>
    </alternativeName>
</protein>
<gene>
    <name evidence="1" type="primary">rplU</name>
    <name type="ordered locus">Spro_0473</name>
</gene>
<keyword id="KW-0687">Ribonucleoprotein</keyword>
<keyword id="KW-0689">Ribosomal protein</keyword>
<keyword id="KW-0694">RNA-binding</keyword>
<keyword id="KW-0699">rRNA-binding</keyword>
<accession>A8G8Z1</accession>
<reference key="1">
    <citation type="submission" date="2007-09" db="EMBL/GenBank/DDBJ databases">
        <title>Complete sequence of chromosome of Serratia proteamaculans 568.</title>
        <authorList>
            <consortium name="US DOE Joint Genome Institute"/>
            <person name="Copeland A."/>
            <person name="Lucas S."/>
            <person name="Lapidus A."/>
            <person name="Barry K."/>
            <person name="Glavina del Rio T."/>
            <person name="Dalin E."/>
            <person name="Tice H."/>
            <person name="Pitluck S."/>
            <person name="Chain P."/>
            <person name="Malfatti S."/>
            <person name="Shin M."/>
            <person name="Vergez L."/>
            <person name="Schmutz J."/>
            <person name="Larimer F."/>
            <person name="Land M."/>
            <person name="Hauser L."/>
            <person name="Kyrpides N."/>
            <person name="Kim E."/>
            <person name="Taghavi S."/>
            <person name="Newman L."/>
            <person name="Vangronsveld J."/>
            <person name="van der Lelie D."/>
            <person name="Richardson P."/>
        </authorList>
    </citation>
    <scope>NUCLEOTIDE SEQUENCE [LARGE SCALE GENOMIC DNA]</scope>
    <source>
        <strain>568</strain>
    </source>
</reference>
<evidence type="ECO:0000255" key="1">
    <source>
        <dbReference type="HAMAP-Rule" id="MF_01363"/>
    </source>
</evidence>
<evidence type="ECO:0000305" key="2"/>